<gene>
    <name type="ordered locus">Bcep1808_3311</name>
</gene>
<protein>
    <recommendedName>
        <fullName evidence="1">Putative membrane protein insertion efficiency factor</fullName>
    </recommendedName>
</protein>
<sequence length="88" mass="9839">MKTVLIALLRFYKVAVSPMLGDRCRFYPSCSDYAREAIQYHGAARGTYLAVRRVCRCHPFSAGGIDLVPPPNSDIRARGEADARSHRL</sequence>
<name>YIDD_BURVG</name>
<reference key="1">
    <citation type="submission" date="2007-03" db="EMBL/GenBank/DDBJ databases">
        <title>Complete sequence of chromosome 1 of Burkholderia vietnamiensis G4.</title>
        <authorList>
            <consortium name="US DOE Joint Genome Institute"/>
            <person name="Copeland A."/>
            <person name="Lucas S."/>
            <person name="Lapidus A."/>
            <person name="Barry K."/>
            <person name="Detter J.C."/>
            <person name="Glavina del Rio T."/>
            <person name="Hammon N."/>
            <person name="Israni S."/>
            <person name="Dalin E."/>
            <person name="Tice H."/>
            <person name="Pitluck S."/>
            <person name="Chain P."/>
            <person name="Malfatti S."/>
            <person name="Shin M."/>
            <person name="Vergez L."/>
            <person name="Schmutz J."/>
            <person name="Larimer F."/>
            <person name="Land M."/>
            <person name="Hauser L."/>
            <person name="Kyrpides N."/>
            <person name="Tiedje J."/>
            <person name="Richardson P."/>
        </authorList>
    </citation>
    <scope>NUCLEOTIDE SEQUENCE [LARGE SCALE GENOMIC DNA]</scope>
    <source>
        <strain>G4 / LMG 22486</strain>
    </source>
</reference>
<evidence type="ECO:0000255" key="1">
    <source>
        <dbReference type="HAMAP-Rule" id="MF_00386"/>
    </source>
</evidence>
<organism>
    <name type="scientific">Burkholderia vietnamiensis (strain G4 / LMG 22486)</name>
    <name type="common">Burkholderia cepacia (strain R1808)</name>
    <dbReference type="NCBI Taxonomy" id="269482"/>
    <lineage>
        <taxon>Bacteria</taxon>
        <taxon>Pseudomonadati</taxon>
        <taxon>Pseudomonadota</taxon>
        <taxon>Betaproteobacteria</taxon>
        <taxon>Burkholderiales</taxon>
        <taxon>Burkholderiaceae</taxon>
        <taxon>Burkholderia</taxon>
        <taxon>Burkholderia cepacia complex</taxon>
    </lineage>
</organism>
<accession>A4JJ47</accession>
<comment type="function">
    <text evidence="1">Could be involved in insertion of integral membrane proteins into the membrane.</text>
</comment>
<comment type="subcellular location">
    <subcellularLocation>
        <location evidence="1">Cell inner membrane</location>
        <topology evidence="1">Peripheral membrane protein</topology>
        <orientation evidence="1">Cytoplasmic side</orientation>
    </subcellularLocation>
</comment>
<comment type="similarity">
    <text evidence="1">Belongs to the UPF0161 family.</text>
</comment>
<keyword id="KW-0997">Cell inner membrane</keyword>
<keyword id="KW-1003">Cell membrane</keyword>
<keyword id="KW-0472">Membrane</keyword>
<proteinExistence type="inferred from homology"/>
<feature type="chain" id="PRO_1000013075" description="Putative membrane protein insertion efficiency factor">
    <location>
        <begin position="1"/>
        <end position="88"/>
    </location>
</feature>
<dbReference type="EMBL" id="CP000614">
    <property type="protein sequence ID" value="ABO56300.1"/>
    <property type="molecule type" value="Genomic_DNA"/>
</dbReference>
<dbReference type="KEGG" id="bvi:Bcep1808_3311"/>
<dbReference type="eggNOG" id="COG0759">
    <property type="taxonomic scope" value="Bacteria"/>
</dbReference>
<dbReference type="HOGENOM" id="CLU_144811_2_2_4"/>
<dbReference type="Proteomes" id="UP000002287">
    <property type="component" value="Chromosome 1"/>
</dbReference>
<dbReference type="GO" id="GO:0005886">
    <property type="term" value="C:plasma membrane"/>
    <property type="evidence" value="ECO:0007669"/>
    <property type="project" value="UniProtKB-SubCell"/>
</dbReference>
<dbReference type="HAMAP" id="MF_00386">
    <property type="entry name" value="UPF0161_YidD"/>
    <property type="match status" value="1"/>
</dbReference>
<dbReference type="InterPro" id="IPR002696">
    <property type="entry name" value="Membr_insert_effic_factor_YidD"/>
</dbReference>
<dbReference type="NCBIfam" id="TIGR00278">
    <property type="entry name" value="membrane protein insertion efficiency factor YidD"/>
    <property type="match status" value="1"/>
</dbReference>
<dbReference type="PANTHER" id="PTHR33383">
    <property type="entry name" value="MEMBRANE PROTEIN INSERTION EFFICIENCY FACTOR-RELATED"/>
    <property type="match status" value="1"/>
</dbReference>
<dbReference type="PANTHER" id="PTHR33383:SF1">
    <property type="entry name" value="MEMBRANE PROTEIN INSERTION EFFICIENCY FACTOR-RELATED"/>
    <property type="match status" value="1"/>
</dbReference>
<dbReference type="Pfam" id="PF01809">
    <property type="entry name" value="YidD"/>
    <property type="match status" value="1"/>
</dbReference>
<dbReference type="SMART" id="SM01234">
    <property type="entry name" value="Haemolytic"/>
    <property type="match status" value="1"/>
</dbReference>